<feature type="initiator methionine" description="Removed; by host" evidence="1">
    <location>
        <position position="1"/>
    </location>
</feature>
<feature type="chain" id="PRO_0000261283" description="Gag-Pol polyprotein">
    <location>
        <begin position="2"/>
        <end position="1430"/>
    </location>
</feature>
<feature type="chain" id="PRO_0000246566" description="Matrix protein p17" evidence="1">
    <location>
        <begin position="2"/>
        <end position="128"/>
    </location>
</feature>
<feature type="chain" id="PRO_0000246567" description="Capsid protein p24" evidence="1">
    <location>
        <begin position="129"/>
        <end position="359"/>
    </location>
</feature>
<feature type="peptide" id="PRO_0000246568" description="Spacer peptide 1" evidence="1">
    <location>
        <begin position="360"/>
        <end position="371"/>
    </location>
</feature>
<feature type="chain" id="PRO_0000246569" description="Nucleocapsid protein p7" evidence="1">
    <location>
        <begin position="372"/>
        <end position="426"/>
    </location>
</feature>
<feature type="peptide" id="PRO_0000246733" description="Transframe peptide" evidence="8">
    <location>
        <begin position="427"/>
        <end position="434"/>
    </location>
</feature>
<feature type="chain" id="PRO_0000246570" description="p6-pol" evidence="8">
    <location>
        <begin position="435"/>
        <end position="482"/>
    </location>
</feature>
<feature type="chain" id="PRO_0000246571" description="Protease" evidence="1">
    <location>
        <begin position="483"/>
        <end position="581"/>
    </location>
</feature>
<feature type="chain" id="PRO_0000246572" description="Reverse transcriptase/ribonuclease H" evidence="1">
    <location>
        <begin position="582"/>
        <end position="1142"/>
    </location>
</feature>
<feature type="chain" id="PRO_0000246573" description="p51 RT" evidence="1">
    <location>
        <begin position="582"/>
        <end position="1022"/>
    </location>
</feature>
<feature type="chain" id="PRO_0000246574" description="p15" evidence="1">
    <location>
        <begin position="1023"/>
        <end position="1142"/>
    </location>
</feature>
<feature type="chain" id="PRO_0000246575" description="Integrase" evidence="1">
    <location>
        <begin position="1143"/>
        <end position="1430"/>
    </location>
</feature>
<feature type="domain" description="Peptidase A2" evidence="10">
    <location>
        <begin position="502"/>
        <end position="571"/>
    </location>
</feature>
<feature type="domain" description="Reverse transcriptase" evidence="11">
    <location>
        <begin position="625"/>
        <end position="815"/>
    </location>
</feature>
<feature type="domain" description="RNase H type-1" evidence="12">
    <location>
        <begin position="1016"/>
        <end position="1139"/>
    </location>
</feature>
<feature type="domain" description="Integrase catalytic" evidence="14">
    <location>
        <begin position="1196"/>
        <end position="1346"/>
    </location>
</feature>
<feature type="zinc finger region" description="CCHC-type 1" evidence="9">
    <location>
        <begin position="384"/>
        <end position="401"/>
    </location>
</feature>
<feature type="zinc finger region" description="CCHC-type 2" evidence="9">
    <location>
        <begin position="405"/>
        <end position="422"/>
    </location>
</feature>
<feature type="zinc finger region" description="Integrase-type" evidence="13">
    <location>
        <begin position="1145"/>
        <end position="1186"/>
    </location>
</feature>
<feature type="DNA-binding region" description="Integrase-type" evidence="15">
    <location>
        <begin position="1365"/>
        <end position="1412"/>
    </location>
</feature>
<feature type="region of interest" description="Interaction with Gp41" evidence="7">
    <location>
        <begin position="7"/>
        <end position="31"/>
    </location>
</feature>
<feature type="region of interest" description="Interaction with host CALM1" evidence="5">
    <location>
        <begin position="8"/>
        <end position="43"/>
    </location>
</feature>
<feature type="region of interest" description="Interaction with host AP3D1" evidence="7">
    <location>
        <begin position="12"/>
        <end position="19"/>
    </location>
</feature>
<feature type="region of interest" description="Interaction with membrane phosphatidylinositol 4,5-bisphosphate and RNA" evidence="7">
    <location>
        <begin position="14"/>
        <end position="33"/>
    </location>
</feature>
<feature type="region of interest" description="Interaction with membrane phosphatidylinositol 4,5-bisphosphate" evidence="7">
    <location>
        <begin position="73"/>
        <end position="77"/>
    </location>
</feature>
<feature type="region of interest" description="Interaction with human PPIA/CYPA and NUP153" evidence="7">
    <location>
        <begin position="185"/>
        <end position="223"/>
    </location>
</feature>
<feature type="region of interest" description="Dimerization/Multimerization of capsid protein p24" evidence="5">
    <location>
        <begin position="273"/>
        <end position="359"/>
    </location>
</feature>
<feature type="region of interest" description="Disordered" evidence="17">
    <location>
        <begin position="438"/>
        <end position="475"/>
    </location>
</feature>
<feature type="region of interest" description="Dimerization of protease" evidence="5">
    <location>
        <begin position="483"/>
        <end position="487"/>
    </location>
</feature>
<feature type="region of interest" description="Dimerization of protease" evidence="5">
    <location>
        <begin position="531"/>
        <end position="537"/>
    </location>
</feature>
<feature type="region of interest" description="Dimerization of protease" evidence="5">
    <location>
        <begin position="570"/>
        <end position="582"/>
    </location>
</feature>
<feature type="region of interest" description="RT 'primer grip'" evidence="1">
    <location>
        <begin position="808"/>
        <end position="816"/>
    </location>
</feature>
<feature type="short sequence motif" description="Nuclear export signal" evidence="1">
    <location>
        <begin position="16"/>
        <end position="22"/>
    </location>
</feature>
<feature type="short sequence motif" description="Nuclear localization signal" evidence="1">
    <location>
        <begin position="26"/>
        <end position="32"/>
    </location>
</feature>
<feature type="short sequence motif" description="Tryptophan repeat motif" evidence="1">
    <location>
        <begin position="980"/>
        <end position="996"/>
    </location>
</feature>
<feature type="compositionally biased region" description="Polar residues" evidence="17">
    <location>
        <begin position="444"/>
        <end position="454"/>
    </location>
</feature>
<feature type="active site" description="For protease activity; shared with dimeric partner" evidence="16">
    <location>
        <position position="507"/>
    </location>
</feature>
<feature type="binding site" evidence="1">
    <location>
        <position position="691"/>
    </location>
    <ligand>
        <name>Mg(2+)</name>
        <dbReference type="ChEBI" id="CHEBI:18420"/>
        <label>1</label>
        <note>catalytic; for reverse transcriptase activity</note>
    </ligand>
</feature>
<feature type="binding site" evidence="1">
    <location>
        <position position="766"/>
    </location>
    <ligand>
        <name>Mg(2+)</name>
        <dbReference type="ChEBI" id="CHEBI:18420"/>
        <label>1</label>
        <note>catalytic; for reverse transcriptase activity</note>
    </ligand>
</feature>
<feature type="binding site" evidence="1">
    <location>
        <position position="767"/>
    </location>
    <ligand>
        <name>Mg(2+)</name>
        <dbReference type="ChEBI" id="CHEBI:18420"/>
        <label>1</label>
        <note>catalytic; for reverse transcriptase activity</note>
    </ligand>
</feature>
<feature type="binding site" evidence="1">
    <location>
        <position position="1025"/>
    </location>
    <ligand>
        <name>Mg(2+)</name>
        <dbReference type="ChEBI" id="CHEBI:18420"/>
        <label>2</label>
        <note>catalytic; for RNase H activity</note>
    </ligand>
</feature>
<feature type="binding site" evidence="1">
    <location>
        <position position="1060"/>
    </location>
    <ligand>
        <name>Mg(2+)</name>
        <dbReference type="ChEBI" id="CHEBI:18420"/>
        <label>2</label>
        <note>catalytic; for RNase H activity</note>
    </ligand>
</feature>
<feature type="binding site" evidence="1">
    <location>
        <position position="1080"/>
    </location>
    <ligand>
        <name>Mg(2+)</name>
        <dbReference type="ChEBI" id="CHEBI:18420"/>
        <label>2</label>
        <note>catalytic; for RNase H activity</note>
    </ligand>
</feature>
<feature type="binding site" evidence="1">
    <location>
        <position position="1131"/>
    </location>
    <ligand>
        <name>Mg(2+)</name>
        <dbReference type="ChEBI" id="CHEBI:18420"/>
        <label>2</label>
        <note>catalytic; for RNase H activity</note>
    </ligand>
</feature>
<feature type="binding site" evidence="13">
    <location>
        <position position="1154"/>
    </location>
    <ligand>
        <name>Zn(2+)</name>
        <dbReference type="ChEBI" id="CHEBI:29105"/>
    </ligand>
</feature>
<feature type="binding site" evidence="13">
    <location>
        <position position="1158"/>
    </location>
    <ligand>
        <name>Zn(2+)</name>
        <dbReference type="ChEBI" id="CHEBI:29105"/>
    </ligand>
</feature>
<feature type="binding site" evidence="13">
    <location>
        <position position="1182"/>
    </location>
    <ligand>
        <name>Zn(2+)</name>
        <dbReference type="ChEBI" id="CHEBI:29105"/>
    </ligand>
</feature>
<feature type="binding site" evidence="13">
    <location>
        <position position="1185"/>
    </location>
    <ligand>
        <name>Zn(2+)</name>
        <dbReference type="ChEBI" id="CHEBI:29105"/>
    </ligand>
</feature>
<feature type="binding site" evidence="1">
    <location>
        <position position="1206"/>
    </location>
    <ligand>
        <name>Mg(2+)</name>
        <dbReference type="ChEBI" id="CHEBI:18420"/>
        <label>3</label>
        <note>catalytic; for integrase activity</note>
    </ligand>
</feature>
<feature type="binding site" evidence="1">
    <location>
        <position position="1258"/>
    </location>
    <ligand>
        <name>Mg(2+)</name>
        <dbReference type="ChEBI" id="CHEBI:18420"/>
        <label>3</label>
        <note>catalytic; for integrase activity</note>
    </ligand>
</feature>
<feature type="binding site" evidence="5">
    <location>
        <position position="1294"/>
    </location>
    <ligand>
        <name>Mg(2+)</name>
        <dbReference type="ChEBI" id="CHEBI:18420"/>
        <label>3</label>
        <note>catalytic; for integrase activity</note>
    </ligand>
</feature>
<feature type="site" description="Cleavage; by viral protease" evidence="1">
    <location>
        <begin position="128"/>
        <end position="129"/>
    </location>
</feature>
<feature type="site" description="Cis/trans isomerization of proline peptide bond; by human PPIA/CYPA" evidence="1">
    <location>
        <begin position="217"/>
        <end position="218"/>
    </location>
</feature>
<feature type="site" description="Cleavage; by viral protease" evidence="1">
    <location>
        <begin position="359"/>
        <end position="360"/>
    </location>
</feature>
<feature type="site" description="Cleavage; by viral protease" evidence="1">
    <location>
        <begin position="371"/>
        <end position="372"/>
    </location>
</feature>
<feature type="site" description="Cleavage; by viral protease" evidence="8">
    <location>
        <begin position="426"/>
        <end position="427"/>
    </location>
</feature>
<feature type="site" description="Cleavage; by viral protease" evidence="1">
    <location>
        <begin position="434"/>
        <end position="435"/>
    </location>
</feature>
<feature type="site" description="Cleavage; by viral protease" evidence="1">
    <location>
        <begin position="482"/>
        <end position="483"/>
    </location>
</feature>
<feature type="site" description="Cleavage; by viral protease" evidence="1">
    <location>
        <begin position="581"/>
        <end position="582"/>
    </location>
</feature>
<feature type="site" description="Essential for RT p66/p51 heterodimerization" evidence="1">
    <location>
        <position position="983"/>
    </location>
</feature>
<feature type="site" description="Essential for RT p66/p51 heterodimerization" evidence="1">
    <location>
        <position position="996"/>
    </location>
</feature>
<feature type="site" description="Cleavage; by viral protease; partial" evidence="1">
    <location>
        <begin position="1022"/>
        <end position="1023"/>
    </location>
</feature>
<feature type="site" description="Cleavage; by viral protease" evidence="1">
    <location>
        <begin position="1142"/>
        <end position="1143"/>
    </location>
</feature>
<feature type="modified residue" description="Phosphotyrosine; by host" evidence="1">
    <location>
        <position position="128"/>
    </location>
</feature>
<feature type="lipid moiety-binding region" description="N-myristoyl glycine; by host" evidence="1">
    <location>
        <position position="2"/>
    </location>
</feature>
<proteinExistence type="inferred from homology"/>
<keyword id="KW-1073">Activation of host caspases by virus</keyword>
<keyword id="KW-0014">AIDS</keyword>
<keyword id="KW-0064">Aspartyl protease</keyword>
<keyword id="KW-0167">Capsid protein</keyword>
<keyword id="KW-0229">DNA integration</keyword>
<keyword id="KW-0233">DNA recombination</keyword>
<keyword id="KW-0238">DNA-binding</keyword>
<keyword id="KW-0239">DNA-directed DNA polymerase</keyword>
<keyword id="KW-0255">Endonuclease</keyword>
<keyword id="KW-1262">Eukaryotic host gene expression shutoff by virus</keyword>
<keyword id="KW-1193">Eukaryotic host translation shutoff by virus</keyword>
<keyword id="KW-1032">Host cell membrane</keyword>
<keyword id="KW-1035">Host cytoplasm</keyword>
<keyword id="KW-1039">Host endosome</keyword>
<keyword id="KW-1190">Host gene expression shutoff by virus</keyword>
<keyword id="KW-1043">Host membrane</keyword>
<keyword id="KW-1048">Host nucleus</keyword>
<keyword id="KW-0945">Host-virus interaction</keyword>
<keyword id="KW-0378">Hydrolase</keyword>
<keyword id="KW-0446">Lipid-binding</keyword>
<keyword id="KW-0449">Lipoprotein</keyword>
<keyword id="KW-0460">Magnesium</keyword>
<keyword id="KW-0472">Membrane</keyword>
<keyword id="KW-0479">Metal-binding</keyword>
<keyword id="KW-1119">Modulation of host cell apoptosis by virus</keyword>
<keyword id="KW-0511">Multifunctional enzyme</keyword>
<keyword id="KW-0519">Myristate</keyword>
<keyword id="KW-0540">Nuclease</keyword>
<keyword id="KW-0548">Nucleotidyltransferase</keyword>
<keyword id="KW-0597">Phosphoprotein</keyword>
<keyword id="KW-0645">Protease</keyword>
<keyword id="KW-1185">Reference proteome</keyword>
<keyword id="KW-0677">Repeat</keyword>
<keyword id="KW-0688">Ribosomal frameshifting</keyword>
<keyword id="KW-0694">RNA-binding</keyword>
<keyword id="KW-0695">RNA-directed DNA polymerase</keyword>
<keyword id="KW-0808">Transferase</keyword>
<keyword id="KW-1179">Viral genome integration</keyword>
<keyword id="KW-0543">Viral nucleoprotein</keyword>
<keyword id="KW-1163">Viral penetration into host nucleus</keyword>
<keyword id="KW-1188">Viral release from host cell</keyword>
<keyword id="KW-0946">Virion</keyword>
<keyword id="KW-0917">Virion maturation</keyword>
<keyword id="KW-1160">Virus entry into host cell</keyword>
<keyword id="KW-0862">Zinc</keyword>
<keyword id="KW-0863">Zinc-finger</keyword>
<organismHost>
    <name type="scientific">Homo sapiens</name>
    <name type="common">Human</name>
    <dbReference type="NCBI Taxonomy" id="9606"/>
</organismHost>
<reference key="1">
    <citation type="journal article" date="2000" name="Virology">
        <title>Virtually full-length subtype F and F/D recombinant HIV-1 from Africa and South America.</title>
        <authorList>
            <person name="Laukkanen T."/>
            <person name="Carr J.K."/>
            <person name="Janssens W."/>
            <person name="Liitsola K."/>
            <person name="Gotte D."/>
            <person name="McCutchan F.E."/>
            <person name="Op de Coul E."/>
            <person name="Cornelissen M."/>
            <person name="Heyndrickx L."/>
            <person name="van der Groen G."/>
            <person name="Salminen M.O."/>
        </authorList>
    </citation>
    <scope>NUCLEOTIDE SEQUENCE [GENOMIC DNA]</scope>
</reference>
<gene>
    <name type="primary">gag-pol</name>
</gene>
<sequence>MGARASILSGGKLDEWEKIQLRPGGKKRYKMKHLIWASRELERFALDPGLLETSEGCQKIIRQLQPSLQTGSEELKSLFNTVAVLYYVHQRAGVTDTKEALDKLEEEQNKSQQKTQQAAADKGVSQNYPIVQNLQGQMVHQSLSPRTLNAWVKVIEEKAFSPEVIPMFSALSEGATPTDLNTMLNTVGGHQAAMQMLKDTINEEAAEWDRLHPVHAGPAPPGQMREPRGSDIAGTTSTLQEQIQWMTGNPPVPVGDIYKRWIILGLNKIVRMYSPVSILDIKQGPKEPFRDYVDRFFKVLRAEQASQDVKGWMTDTLLVQNANPDCKTILKALGTGATLEEMMTACQGVGGPSHKARVLAEAMSQANSAIMMQKSNFKGQRRVVKCFNCGKEGHIARNCRAPRKKGCWKCGREGHQMKDCTERQANFFRENLAFQQGEARKFPSEQTRANSPTSRELRVQRGDNPLSEAGAERRGTVPSLSFPQITLWQRPLVTIKIGGQIKEALLDTGADDTVLEDINLPGKWKPKMIGGIGGFIKVKQYDNILIEICGHKAIGTVLVGPTPVNIIGRNMLTQIGCTLNFPVSPIETVPVKLKPGMDGPKVKQWPLTEEKIKALTEICLEMEKEGKISKIGPENPYNTPVFAIKKKDSSKWRKLVDFKELNKRTQDFWEVQLGIPHPAGLKKKKSVTVLDVGDAYFSVPLDKDFKKYTAFTIPSVNNETPGIRYQYNVLPQGWKGSPAIFQCSMTKILEPFRMKNPDIVIYQYMDDLYVGSDLEIGQHRTKIEELREHLLRWGFTTPDKKHQKEPPFLWMGHELHPDKWTVQPIQLPNKDSWTVNDIQKLVGKLNWASQIYPGIKVRPLCKLLRGAKALTDIVPLTAEAELELAKNREILREPVHGVYYDPSKDLIAEIQKQGDGQWTYQIYQNPFKNLKTGKYAKVRSAHTNDVKQLTEAVQKIALESIVIWGKRSPKFKLPILKETWDTWWTDYWQATWIPEWEFVNTPPLVKLWYQLETEPIAGADTFYVDGASNRETKKGKAGYVTDKGKQKVVSLTETTNQKAELQAIYLALQDSGSEVNIVTDSQYALGIIQAQPDKSESEIVNQIIEQLIQKERVYLSWVPAHKGIGGNEQVDKLVSAGVRKILFLDGIDKAQEEHEKYHNNWRAMASDFNLPPIVAKEIVASCDKCQLKGEAMHGQVDCSPGIWQLDCTHLEGKVILVAVHVASEYIEAEVIPAETGQETAYFILKLAGRWPVKIIHTDNGSNFTSAAVKASCWWAGIQQEFGIPYNPQSQGVVESINKELKKIIGQVRDQAEHLKTAVQMAVFIHNFKRKGGIGGYSAGERIIDIISTDIQTRELQKQITKIQNFRVYYRDSRNPVWKGPAKLLWKGEGAVVIQDNSEIKIVPRRKAKIIRDYGKQMAVDDCVAGRQDED</sequence>
<organism>
    <name type="scientific">Human immunodeficiency virus type 1 group M subtype F1 (isolate VI850)</name>
    <name type="common">HIV-1</name>
    <dbReference type="NCBI Taxonomy" id="388813"/>
    <lineage>
        <taxon>Viruses</taxon>
        <taxon>Riboviria</taxon>
        <taxon>Pararnavirae</taxon>
        <taxon>Artverviricota</taxon>
        <taxon>Revtraviricetes</taxon>
        <taxon>Ortervirales</taxon>
        <taxon>Retroviridae</taxon>
        <taxon>Orthoretrovirinae</taxon>
        <taxon>Lentivirus</taxon>
        <taxon>Human immunodeficiency virus type 1</taxon>
    </lineage>
</organism>
<comment type="function">
    <molecule>Gag-Pol polyprotein</molecule>
    <text evidence="1">Mediates, with Gag polyprotein, the essential events in virion assembly, including binding the plasma membrane, making the protein-protein interactions necessary to create spherical particles, recruiting the viral Env proteins, and packaging the genomic RNA via direct interactions with the RNA packaging sequence (Psi). Gag-Pol polyprotein may regulate its own translation, by the binding genomic RNA in the 5'-UTR. At low concentration, the polyprotein would promote translation, whereas at high concentration, the polyprotein would encapsidate genomic RNA and then shut off translation.</text>
</comment>
<comment type="function">
    <molecule>Matrix protein p17</molecule>
    <text evidence="7">Targets the polyprotein to the plasma membrane via a multipartite membrane-binding signal, that includes its myristoylated N-terminus. Matrix protein is part of the pre-integration complex. Implicated in the release from host cell mediated by Vpu. Binds to RNA.</text>
</comment>
<comment type="function">
    <molecule>Capsid protein p24</molecule>
    <text evidence="5 7">Forms the conical core that encapsulates the genomic RNA-nucleocapsid complex in the virion. Most core are conical, with only 7% tubular. The core is constituted by capsid protein hexamer subunits. The core is disassembled soon after virion entry (By similarity). Host restriction factors such as TRIM5-alpha or TRIMCyp bind retroviral capsids and cause premature capsid disassembly, leading to blocks in reverse transcription. Capsid restriction by TRIM5 is one of the factors which restricts HIV-1 to the human species. Host PIN1 apparently facilitates the virion uncoating. On the other hand, interactions with PDZD8 or CYPA stabilize the capsid.</text>
</comment>
<comment type="function">
    <molecule>Nucleocapsid protein p7</molecule>
    <text evidence="5">Encapsulates and protects viral dimeric unspliced genomic RNA (gRNA). Binds these RNAs through its zinc fingers. Acts as a nucleic acid chaperone which is involved in rearangement of nucleic acid secondary structure during gRNA retrotranscription. Also facilitates template switch leading to recombination. As part of the polyprotein, participates in gRNA dimerization, packaging, tRNA incorporation and virion assembly.</text>
</comment>
<comment type="function">
    <molecule>Protease</molecule>
    <text evidence="5 10">Aspartyl protease that mediates proteolytic cleavages of Gag and Gag-Pol polyproteins during or shortly after the release of the virion from the plasma membrane. Cleavages take place as an ordered, step-wise cascade to yield mature proteins. This process is called maturation. Displays maximal activity during the budding process just prior to particle release from the cell. Also cleaves Nef and Vif, probably concomitantly with viral structural proteins on maturation of virus particles. Hydrolyzes host EIF4GI and PABP1 in order to shut off the capped cellular mRNA translation. The resulting inhibition of cellular protein synthesis serves to ensure maximal viral gene expression and to evade host immune response. Also mediates cleavage of host YTHDF3. Mediates cleavage of host CARD8, thereby activating the CARD8 inflammasome, leading to the clearance of latent HIV-1 in patient CD4(+) T-cells after viral reactivation; in contrast, HIV-1 can evade CARD8-sensing when its protease remains inactive in infected cells prior to viral budding (By similarity).</text>
</comment>
<comment type="function">
    <molecule>Reverse transcriptase/ribonuclease H</molecule>
    <text evidence="5">Multifunctional enzyme that converts the viral RNA genome into dsDNA in the cytoplasm, shortly after virus entry into the cell. This enzyme displays a DNA polymerase activity that can copy either DNA or RNA templates, and a ribonuclease H (RNase H) activity that cleaves the RNA strand of RNA-DNA heteroduplexes in a partially processive 3' to 5' endonucleasic mode. Conversion of viral genomic RNA into dsDNA requires many steps. A tRNA(3)-Lys binds to the primer-binding site (PBS) situated at the 5'-end of the viral RNA. RT uses the 3' end of the tRNA primer to perform a short round of RNA-dependent minus-strand DNA synthesis. The reading proceeds through the U5 region and ends after the repeated (R) region which is present at both ends of viral RNA. The portion of the RNA-DNA heteroduplex is digested by the RNase H, resulting in a ssDNA product attached to the tRNA primer. This ssDNA/tRNA hybridizes with the identical R region situated at the 3' end of viral RNA. This template exchange, known as minus-strand DNA strong stop transfer, can be either intra- or intermolecular. RT uses the 3' end of this newly synthesized short ssDNA to perform the RNA-dependent minus-strand DNA synthesis of the whole template. RNase H digests the RNA template except for two polypurine tracts (PPTs) situated at the 5'-end and near the center of the genome. It is not clear if both polymerase and RNase H activities are simultaneous. RNase H probably can proceed both in a polymerase-dependent (RNA cut into small fragments by the same RT performing DNA synthesis) and a polymerase-independent mode (cleavage of remaining RNA fragments by free RTs). Secondly, RT performs DNA-directed plus-strand DNA synthesis using the PPTs that have not been removed by RNase H as primers. PPTs and tRNA primers are then removed by RNase H. The 3' and 5' ssDNA PBS regions hybridize to form a circular dsDNA intermediate. Strand displacement synthesis by RT to the PBS and PPT ends produces a blunt ended, linear dsDNA copy of the viral genome that includes long terminal repeats (LTRs) at both ends.</text>
</comment>
<comment type="function">
    <molecule>Integrase</molecule>
    <text evidence="5">Catalyzes viral DNA integration into the host chromosome, by performing a series of DNA cutting and joining reactions. This enzyme activity takes place after virion entry into a cell and reverse transcription of the RNA genome in dsDNA. The first step in the integration process is 3' processing. This step requires a complex comprising the viral genome, matrix protein, Vpr and integrase. This complex is called the pre-integration complex (PIC). The integrase protein removes 2 nucleotides from each 3' end of the viral DNA, leaving recessed CA OH's at the 3' ends. In the second step, the PIC enters cell nucleus. This process is mediated through integrase and Vpr proteins, and allows the virus to infect a non dividing cell. This ability to enter the nucleus is specific of lentiviruses, other retroviruses cannot and rely on cell division to access cell chromosomes. In the third step, termed strand transfer, the integrase protein joins the previously processed 3' ends to the 5' ends of strands of target cellular DNA at the site of integration. The 5'-ends are produced by integrase-catalyzed staggered cuts, 5 bp apart. A Y-shaped, gapped, recombination intermediate results, with the 5'-ends of the viral DNA strands and the 3' ends of target DNA strands remaining unjoined, flanking a gap of 5 bp. The last step is viral DNA integration into host chromosome. This involves host DNA repair synthesis in which the 5 bp gaps between the unjoined strands are filled in and then ligated. Since this process occurs at both cuts flanking the HIV genome, a 5 bp duplication of host DNA is produced at the ends of HIV-1 integration. Alternatively, Integrase may catalyze the excision of viral DNA just after strand transfer, this is termed disintegration.</text>
</comment>
<comment type="catalytic activity">
    <reaction evidence="10">
        <text>Specific for a P1 residue that is hydrophobic, and P1' variable, but often Pro.</text>
        <dbReference type="EC" id="3.4.23.16"/>
    </reaction>
</comment>
<comment type="catalytic activity">
    <reaction evidence="1">
        <text>Endohydrolysis of RNA in RNA/DNA hybrids. Three different cleavage modes: 1. sequence-specific internal cleavage of RNA. Human immunodeficiency virus type 1 and Moloney murine leukemia virus enzymes prefer to cleave the RNA strand one nucleotide away from the RNA-DNA junction. 2. RNA 5'-end directed cleavage 13-19 nucleotides from the RNA end. 3. DNA 3'-end directed cleavage 15-20 nucleotides away from the primer terminus.</text>
        <dbReference type="EC" id="3.1.26.13"/>
    </reaction>
</comment>
<comment type="catalytic activity">
    <reaction evidence="1">
        <text>3'-end directed exonucleolytic cleavage of viral RNA-DNA hybrid.</text>
        <dbReference type="EC" id="3.1.13.2"/>
    </reaction>
</comment>
<comment type="catalytic activity">
    <reaction evidence="11">
        <text>DNA(n) + a 2'-deoxyribonucleoside 5'-triphosphate = DNA(n+1) + diphosphate</text>
        <dbReference type="Rhea" id="RHEA:22508"/>
        <dbReference type="Rhea" id="RHEA-COMP:17339"/>
        <dbReference type="Rhea" id="RHEA-COMP:17340"/>
        <dbReference type="ChEBI" id="CHEBI:33019"/>
        <dbReference type="ChEBI" id="CHEBI:61560"/>
        <dbReference type="ChEBI" id="CHEBI:173112"/>
        <dbReference type="EC" id="2.7.7.49"/>
    </reaction>
</comment>
<comment type="catalytic activity">
    <reaction evidence="11">
        <text>DNA(n) + a 2'-deoxyribonucleoside 5'-triphosphate = DNA(n+1) + diphosphate</text>
        <dbReference type="Rhea" id="RHEA:22508"/>
        <dbReference type="Rhea" id="RHEA-COMP:17339"/>
        <dbReference type="Rhea" id="RHEA-COMP:17340"/>
        <dbReference type="ChEBI" id="CHEBI:33019"/>
        <dbReference type="ChEBI" id="CHEBI:61560"/>
        <dbReference type="ChEBI" id="CHEBI:173112"/>
        <dbReference type="EC" id="2.7.7.7"/>
    </reaction>
</comment>
<comment type="cofactor">
    <cofactor evidence="1">
        <name>Mg(2+)</name>
        <dbReference type="ChEBI" id="CHEBI:18420"/>
    </cofactor>
    <text evidence="1">Binds 2 magnesium ions for reverse transcriptase polymerase activity.</text>
</comment>
<comment type="cofactor">
    <cofactor evidence="1">
        <name>Mg(2+)</name>
        <dbReference type="ChEBI" id="CHEBI:18420"/>
    </cofactor>
    <text evidence="1">Binds 2 magnesium ions for ribonuclease H (RNase H) activity. Substrate-binding is a precondition for magnesium binding.</text>
</comment>
<comment type="cofactor">
    <cofactor evidence="1">
        <name>Mg(2+)</name>
        <dbReference type="ChEBI" id="CHEBI:18420"/>
    </cofactor>
    <text evidence="1">Magnesium ions are required for integrase activity. Binds at least 1, maybe 2 magnesium ions.</text>
</comment>
<comment type="activity regulation">
    <text evidence="1">Protease: The viral protease is inhibited by many synthetic protease inhibitors (PIs), such as amprenavir, atazanavir, indinavir, loprinavir, nelfinavir, ritonavir and saquinavir. Use of protease inhibitors in tritherapy regimens permit more ambitious therapeutic strategies. Reverse transcriptase/ribonuclease H: RT can be inhibited either by nucleoside RT inhibitors (NRTIs) or by non nucleoside RT inhibitors (NNRTIs). NRTIs act as chain terminators, whereas NNRTIs inhibit DNA polymerization by binding a small hydrophobic pocket near the RT active site and inducing an allosteric change in this region. Classical NRTIs are abacavir, adefovir (PMEA), didanosine (ddI), lamivudine (3TC), stavudine (d4T), tenofovir (PMPA), zalcitabine (ddC), and zidovudine (AZT). Classical NNRTIs are atevirdine (BHAP U-87201E), delavirdine, efavirenz (DMP-266), emivirine (I-EBU), and nevirapine (BI-RG-587). The tritherapies used as a basic effective treatment of AIDS associate two NRTIs and one NNRTI.</text>
</comment>
<comment type="subunit">
    <molecule>Matrix protein p17</molecule>
    <text evidence="5 7">Homotrimer; further assembles as hexamers of trimers (By similarity). Interacts with gp41 (via C-terminus) (By similarity). Interacts with host CALM1; this interaction induces a conformational change in the Matrix protein, triggering exposure of the myristate group (By similarity). Interacts with host AP3D1; this interaction allows the polyprotein trafficking to multivesicular bodies during virus assembly (By similarity). Part of the pre-integration complex (PIC) which is composed of viral genome, matrix protein, Vpr and integrase (By similarity).</text>
</comment>
<comment type="subunit">
    <molecule>Capsid protein p24</molecule>
    <text evidence="5 7">Homodimer; the homodimer further multimerizes as homohexamers or homopentamers. Interacts with human PPIA/CYPA (By similarity); This interaction stabilizes the capsid. Interacts with human NUP153 (By similarity). Interacts with host PDZD8; this interaction stabilizes the capsid (By similarity). Interacts with monkey TRIM5; this interaction destabilizes the capsid (By similarity).</text>
</comment>
<comment type="subunit">
    <molecule>Protease</molecule>
    <text evidence="5 7">Homodimer, whose active site consists of two apposed aspartic acid residues.</text>
</comment>
<comment type="subunit">
    <molecule>Reverse transcriptase/ribonuclease H</molecule>
    <text evidence="3">Heterodimer of p66 RT and p51 RT (RT p66/p51) (By similarity). Heterodimerization of RT is essential for DNA polymerase activity (By similarity). The overall folding of the subdomains is similar in p66 RT and p51 RT but the spatial arrangements of the subdomains are dramatically different (By similarity).</text>
</comment>
<comment type="subunit">
    <molecule>Integrase</molecule>
    <text evidence="4 5 7">Homotetramer; may further associate as a homohexadecamer (By similarity). Part of the pre-integration complex (PIC) which is composed of viral genome, matrix protein, Vpr and integrase. Interacts with human SMARCB1/INI1 and human PSIP1/LEDGF isoform 1. Interacts with human KPNA3; this interaction might play a role in nuclear import of the pre-integration complex (By similarity). Interacts with human NUP153; this interaction might play a role in nuclear import of the pre-integration complex (By similarity).</text>
</comment>
<comment type="subcellular location">
    <molecule>Gag-Pol polyprotein</molecule>
    <subcellularLocation>
        <location>Host cell membrane</location>
        <topology>Lipid-anchor</topology>
    </subcellularLocation>
    <subcellularLocation>
        <location>Host endosome</location>
        <location>Host multivesicular body</location>
    </subcellularLocation>
    <text evidence="7">These locations are linked to virus assembly sites. The main location is the cell membrane, but under some circumstances, late endosomal compartments can serve as productive sites for virion assembly.</text>
</comment>
<comment type="subcellular location">
    <molecule>Matrix protein p17</molecule>
    <subcellularLocation>
        <location>Virion membrane</location>
        <topology evidence="18">Lipid-anchor</topology>
    </subcellularLocation>
    <subcellularLocation>
        <location evidence="1">Host nucleus</location>
    </subcellularLocation>
    <subcellularLocation>
        <location evidence="1">Host cytoplasm</location>
    </subcellularLocation>
</comment>
<comment type="subcellular location">
    <molecule>Capsid protein p24</molecule>
    <subcellularLocation>
        <location evidence="18">Virion</location>
    </subcellularLocation>
</comment>
<comment type="subcellular location">
    <molecule>Nucleocapsid protein p7</molecule>
    <subcellularLocation>
        <location evidence="18">Virion</location>
    </subcellularLocation>
</comment>
<comment type="subcellular location">
    <molecule>Reverse transcriptase/ribonuclease H</molecule>
    <subcellularLocation>
        <location evidence="18">Virion</location>
    </subcellularLocation>
</comment>
<comment type="subcellular location">
    <molecule>Integrase</molecule>
    <subcellularLocation>
        <location evidence="18">Virion</location>
    </subcellularLocation>
    <subcellularLocation>
        <location evidence="18">Host nucleus</location>
    </subcellularLocation>
    <subcellularLocation>
        <location evidence="18">Host cytoplasm</location>
    </subcellularLocation>
    <text evidence="18">Nuclear at initial phase, cytoplasmic at assembly.</text>
</comment>
<comment type="alternative products">
    <event type="ribosomal frameshifting"/>
    <isoform>
        <id>Q9QSR3-1</id>
        <name>Gag-Pol polyprotein</name>
        <sequence type="displayed"/>
    </isoform>
    <isoform>
        <id>Q9QSR4-1</id>
        <name>Gag polyprotein</name>
        <sequence type="external"/>
    </isoform>
    <text>Translation results in the formation of the Gag polyprotein most of the time. Ribosomal frameshifting at the gag-pol genes boundary occurs at low frequency and produces the Gag-Pol polyprotein. This strategy of translation probably allows the virus to modulate the quantity of each viral protein. Maintenance of a correct Gag to Gag-Pol ratio is essential for RNA dimerization and viral infectivity.</text>
</comment>
<comment type="domain">
    <molecule>Reverse transcriptase/ribonuclease H</molecule>
    <text evidence="1">RT is structured in five subdomains: finger, palm, thumb, connection and RNase H. Within the palm subdomain, the 'primer grip' region is thought to be involved in the positioning of the primer terminus for accommodating the incoming nucleotide. The RNase H domain stabilizes the association of RT with primer-template.</text>
</comment>
<comment type="domain">
    <molecule>Reverse transcriptase/ribonuclease H</molecule>
    <text evidence="1">The tryptophan repeat motif is involved in RT p66/p51 dimerization (By similarity).</text>
</comment>
<comment type="domain">
    <molecule>Integrase</molecule>
    <text evidence="1">The core domain contains the D-x(n)-D-x(35)-E motif, named for the phylogenetically conserved glutamic acid and aspartic acid residues and the invariant 35 amino acid spacing between the second and third acidic residues. Each acidic residue of the D,D(35)E motif is independently essential for the 3'-processing and strand transfer activities of purified integrase protein.</text>
</comment>
<comment type="PTM">
    <molecule>Gag-Pol polyprotein</molecule>
    <text evidence="5 11">Specific enzymatic cleavages by the viral protease yield mature proteins. The protease is released by autocatalytic cleavage. The polyprotein is cleaved during and after budding, this process is termed maturation. Proteolytic cleavage of p66 RT removes the RNase H domain to yield the p51 RT subunit. Nucleocapsid protein p7 might be further cleaved after virus entry.</text>
</comment>
<comment type="PTM">
    <molecule>Matrix protein p17</molecule>
    <text evidence="5">Tyrosine phosphorylated presumably in the virion by a host kinase. Phosphorylation is apparently not a major regulator of membrane association.</text>
</comment>
<comment type="PTM">
    <molecule>Capsid protein p24</molecule>
    <text evidence="6">Phosphorylated possibly by host MAPK1; this phosphorylation is necessary for Pin1-mediated virion uncoating.</text>
</comment>
<comment type="PTM">
    <molecule>Nucleocapsid protein p7</molecule>
    <text evidence="2">Methylated by host PRMT6, impairing its function by reducing RNA annealing and the initiation of reverse transcription.</text>
</comment>
<comment type="miscellaneous">
    <molecule>Reverse transcriptase/ribonuclease H</molecule>
    <text evidence="1">Error-prone enzyme that lacks a proof-reading function. High mutations rate is a direct consequence of this characteristic. RT also displays frequent template switching leading to high recombination rate. Recombination mostly occurs between homologous regions of the two copackaged RNA genomes. If these two RNA molecules derive from different viral strains, reverse transcription will give rise to highly recombinated proviral DNAs.</text>
</comment>
<comment type="miscellaneous">
    <text>HIV-1 lineages are divided in three main groups, M (for Major), O (for Outlier), and N (for New, or Non-M, Non-O). The vast majority of strains found worldwide belong to the group M. Group O seems to be endemic to and largely confined to Cameroon and neighboring countries in West Central Africa, where these viruses represent a small minority of HIV-1 strains. The group N is represented by a limited number of isolates from Cameroonian persons. The group M is further subdivided in 9 clades or subtypes (A to D, F to H, J and K).</text>
</comment>
<comment type="miscellaneous">
    <text>Resistance to inhibitors associated with mutations are observed both in viral protease and in reverse transcriptase. Most of the time, single mutations confer only a modest reduction in drug susceptibility. Combination of several mutations is usually required to develop a high-level drug resistance. These mutations are predominantly found in clade B viruses and not in other genotypes. They are listed in the clade B representative isolate HXB2 (AC P04585).</text>
</comment>
<comment type="miscellaneous">
    <molecule>Isoform Gag-Pol polyprotein</molecule>
    <text>Produced by -1 ribosomal frameshifting.</text>
</comment>
<comment type="online information" name="HIV drug resistance mutations">
    <link uri="https://www.iasusa.org/hiv-drug-resistance/hiv-drug-resistance-mutations/"/>
</comment>
<comment type="online information" name="hivdb">
    <link uri="https://hivdb.stanford.edu"/>
    <text>HIV drug resistance database</text>
</comment>
<name>POL_HV1VI</name>
<protein>
    <recommendedName>
        <fullName>Gag-Pol polyprotein</fullName>
    </recommendedName>
    <alternativeName>
        <fullName>Pr160Gag-Pol</fullName>
    </alternativeName>
    <component>
        <recommendedName>
            <fullName>Matrix protein p17</fullName>
            <shortName>MA</shortName>
        </recommendedName>
    </component>
    <component>
        <recommendedName>
            <fullName>Capsid protein p24</fullName>
            <shortName>CA</shortName>
        </recommendedName>
    </component>
    <component>
        <recommendedName>
            <fullName evidence="7">Spacer peptide 1</fullName>
            <shortName>SP1</shortName>
        </recommendedName>
        <alternativeName>
            <fullName>p2</fullName>
        </alternativeName>
    </component>
    <component>
        <recommendedName>
            <fullName>Nucleocapsid protein p7</fullName>
            <shortName>NC</shortName>
        </recommendedName>
    </component>
    <component>
        <recommendedName>
            <fullName>Transframe peptide</fullName>
            <shortName>TF</shortName>
        </recommendedName>
    </component>
    <component>
        <recommendedName>
            <fullName>p6-pol</fullName>
            <shortName>p6*</shortName>
        </recommendedName>
    </component>
    <component>
        <recommendedName>
            <fullName>Protease</fullName>
            <ecNumber>3.4.23.16</ecNumber>
        </recommendedName>
        <alternativeName>
            <fullName>PR</fullName>
        </alternativeName>
        <alternativeName>
            <fullName>Retropepsin</fullName>
        </alternativeName>
    </component>
    <component>
        <recommendedName>
            <fullName>Reverse transcriptase/ribonuclease H</fullName>
            <ecNumber>2.7.7.49</ecNumber>
            <ecNumber>2.7.7.7</ecNumber>
            <ecNumber>3.1.26.13</ecNumber>
        </recommendedName>
        <alternativeName>
            <fullName>Exoribonuclease H</fullName>
            <ecNumber>3.1.13.2</ecNumber>
        </alternativeName>
        <alternativeName>
            <fullName>p66 RT</fullName>
        </alternativeName>
    </component>
    <component>
        <recommendedName>
            <fullName>p51 RT</fullName>
        </recommendedName>
    </component>
    <component>
        <recommendedName>
            <fullName>p15</fullName>
        </recommendedName>
    </component>
    <component>
        <recommendedName>
            <fullName>Integrase</fullName>
            <shortName>IN</shortName>
            <ecNumber evidence="5">2.7.7.-</ecNumber>
            <ecNumber evidence="5">3.1.-.-</ecNumber>
        </recommendedName>
    </component>
</protein>
<accession>Q9QSR3</accession>
<dbReference type="EC" id="3.4.23.16"/>
<dbReference type="EC" id="2.7.7.49"/>
<dbReference type="EC" id="2.7.7.7"/>
<dbReference type="EC" id="3.1.26.13"/>
<dbReference type="EC" id="3.1.13.2"/>
<dbReference type="EC" id="2.7.7.-" evidence="5"/>
<dbReference type="EC" id="3.1.-.-" evidence="5"/>
<dbReference type="EMBL" id="AF077336">
    <property type="protein sequence ID" value="AAD46088.1"/>
    <property type="status" value="ALT_SEQ"/>
    <property type="molecule type" value="Genomic_DNA"/>
</dbReference>
<dbReference type="SMR" id="Q9QSR3"/>
<dbReference type="MEROPS" id="A02.001"/>
<dbReference type="PRO" id="PR:Q9QSR3"/>
<dbReference type="Proteomes" id="UP000007418">
    <property type="component" value="Segment"/>
</dbReference>
<dbReference type="GO" id="GO:0043657">
    <property type="term" value="C:host cell"/>
    <property type="evidence" value="ECO:0007669"/>
    <property type="project" value="GOC"/>
</dbReference>
<dbReference type="GO" id="GO:0042025">
    <property type="term" value="C:host cell nucleus"/>
    <property type="evidence" value="ECO:0007669"/>
    <property type="project" value="UniProtKB-SubCell"/>
</dbReference>
<dbReference type="GO" id="GO:0020002">
    <property type="term" value="C:host cell plasma membrane"/>
    <property type="evidence" value="ECO:0007669"/>
    <property type="project" value="UniProtKB-SubCell"/>
</dbReference>
<dbReference type="GO" id="GO:0072494">
    <property type="term" value="C:host multivesicular body"/>
    <property type="evidence" value="ECO:0007669"/>
    <property type="project" value="UniProtKB-SubCell"/>
</dbReference>
<dbReference type="GO" id="GO:0016020">
    <property type="term" value="C:membrane"/>
    <property type="evidence" value="ECO:0007669"/>
    <property type="project" value="UniProtKB-KW"/>
</dbReference>
<dbReference type="GO" id="GO:0019013">
    <property type="term" value="C:viral nucleocapsid"/>
    <property type="evidence" value="ECO:0007669"/>
    <property type="project" value="UniProtKB-KW"/>
</dbReference>
<dbReference type="GO" id="GO:0055036">
    <property type="term" value="C:virion membrane"/>
    <property type="evidence" value="ECO:0007669"/>
    <property type="project" value="UniProtKB-SubCell"/>
</dbReference>
<dbReference type="GO" id="GO:0004190">
    <property type="term" value="F:aspartic-type endopeptidase activity"/>
    <property type="evidence" value="ECO:0007669"/>
    <property type="project" value="UniProtKB-KW"/>
</dbReference>
<dbReference type="GO" id="GO:0003677">
    <property type="term" value="F:DNA binding"/>
    <property type="evidence" value="ECO:0007669"/>
    <property type="project" value="UniProtKB-KW"/>
</dbReference>
<dbReference type="GO" id="GO:0003887">
    <property type="term" value="F:DNA-directed DNA polymerase activity"/>
    <property type="evidence" value="ECO:0007669"/>
    <property type="project" value="UniProtKB-KW"/>
</dbReference>
<dbReference type="GO" id="GO:0004533">
    <property type="term" value="F:exoribonuclease H activity"/>
    <property type="evidence" value="ECO:0007669"/>
    <property type="project" value="UniProtKB-EC"/>
</dbReference>
<dbReference type="GO" id="GO:0008289">
    <property type="term" value="F:lipid binding"/>
    <property type="evidence" value="ECO:0007669"/>
    <property type="project" value="UniProtKB-KW"/>
</dbReference>
<dbReference type="GO" id="GO:0035613">
    <property type="term" value="F:RNA stem-loop binding"/>
    <property type="evidence" value="ECO:0007669"/>
    <property type="project" value="TreeGrafter"/>
</dbReference>
<dbReference type="GO" id="GO:0003964">
    <property type="term" value="F:RNA-directed DNA polymerase activity"/>
    <property type="evidence" value="ECO:0007669"/>
    <property type="project" value="UniProtKB-KW"/>
</dbReference>
<dbReference type="GO" id="GO:0004523">
    <property type="term" value="F:RNA-DNA hybrid ribonuclease activity"/>
    <property type="evidence" value="ECO:0007669"/>
    <property type="project" value="InterPro"/>
</dbReference>
<dbReference type="GO" id="GO:0005198">
    <property type="term" value="F:structural molecule activity"/>
    <property type="evidence" value="ECO:0007669"/>
    <property type="project" value="InterPro"/>
</dbReference>
<dbReference type="GO" id="GO:0008270">
    <property type="term" value="F:zinc ion binding"/>
    <property type="evidence" value="ECO:0007669"/>
    <property type="project" value="UniProtKB-KW"/>
</dbReference>
<dbReference type="GO" id="GO:0015074">
    <property type="term" value="P:DNA integration"/>
    <property type="evidence" value="ECO:0007669"/>
    <property type="project" value="UniProtKB-KW"/>
</dbReference>
<dbReference type="GO" id="GO:0006310">
    <property type="term" value="P:DNA recombination"/>
    <property type="evidence" value="ECO:0007669"/>
    <property type="project" value="UniProtKB-KW"/>
</dbReference>
<dbReference type="GO" id="GO:0075713">
    <property type="term" value="P:establishment of integrated proviral latency"/>
    <property type="evidence" value="ECO:0007669"/>
    <property type="project" value="UniProtKB-KW"/>
</dbReference>
<dbReference type="GO" id="GO:0006508">
    <property type="term" value="P:proteolysis"/>
    <property type="evidence" value="ECO:0007669"/>
    <property type="project" value="UniProtKB-KW"/>
</dbReference>
<dbReference type="GO" id="GO:0046718">
    <property type="term" value="P:symbiont entry into host cell"/>
    <property type="evidence" value="ECO:0007669"/>
    <property type="project" value="UniProtKB-KW"/>
</dbReference>
<dbReference type="GO" id="GO:0052151">
    <property type="term" value="P:symbiont-mediated activation of host apoptosis"/>
    <property type="evidence" value="ECO:0007669"/>
    <property type="project" value="UniProtKB-KW"/>
</dbReference>
<dbReference type="GO" id="GO:0039657">
    <property type="term" value="P:symbiont-mediated suppression of host gene expression"/>
    <property type="evidence" value="ECO:0007669"/>
    <property type="project" value="UniProtKB-KW"/>
</dbReference>
<dbReference type="GO" id="GO:0044826">
    <property type="term" value="P:viral genome integration into host DNA"/>
    <property type="evidence" value="ECO:0007669"/>
    <property type="project" value="UniProtKB-KW"/>
</dbReference>
<dbReference type="GO" id="GO:0075732">
    <property type="term" value="P:viral penetration into host nucleus"/>
    <property type="evidence" value="ECO:0007669"/>
    <property type="project" value="UniProtKB-KW"/>
</dbReference>
<dbReference type="GO" id="GO:0075523">
    <property type="term" value="P:viral translational frameshifting"/>
    <property type="evidence" value="ECO:0007669"/>
    <property type="project" value="UniProtKB-KW"/>
</dbReference>
<dbReference type="CDD" id="cd05482">
    <property type="entry name" value="HIV_retropepsin_like"/>
    <property type="match status" value="1"/>
</dbReference>
<dbReference type="CDD" id="cd01645">
    <property type="entry name" value="RT_Rtv"/>
    <property type="match status" value="1"/>
</dbReference>
<dbReference type="FunFam" id="1.10.1200.30:FF:000001">
    <property type="entry name" value="Gag polyprotein"/>
    <property type="match status" value="1"/>
</dbReference>
<dbReference type="FunFam" id="1.10.375.10:FF:000001">
    <property type="entry name" value="Gag polyprotein"/>
    <property type="match status" value="1"/>
</dbReference>
<dbReference type="FunFam" id="4.10.60.10:FF:000001">
    <property type="entry name" value="Gag polyprotein"/>
    <property type="match status" value="1"/>
</dbReference>
<dbReference type="FunFam" id="2.40.70.10:FF:000001">
    <property type="entry name" value="Gag-Pol polyprotein"/>
    <property type="match status" value="1"/>
</dbReference>
<dbReference type="FunFam" id="3.30.70.270:FF:000006">
    <property type="entry name" value="Gag-Pol polyprotein"/>
    <property type="match status" value="1"/>
</dbReference>
<dbReference type="FunFam" id="3.30.420.10:FF:000017">
    <property type="entry name" value="POL polyprotein"/>
    <property type="match status" value="1"/>
</dbReference>
<dbReference type="Gene3D" id="1.10.10.200">
    <property type="match status" value="1"/>
</dbReference>
<dbReference type="Gene3D" id="1.10.1200.30">
    <property type="match status" value="1"/>
</dbReference>
<dbReference type="Gene3D" id="3.30.70.270">
    <property type="match status" value="3"/>
</dbReference>
<dbReference type="Gene3D" id="2.40.70.10">
    <property type="entry name" value="Acid Proteases"/>
    <property type="match status" value="1"/>
</dbReference>
<dbReference type="Gene3D" id="3.10.10.10">
    <property type="entry name" value="HIV Type 1 Reverse Transcriptase, subunit A, domain 1"/>
    <property type="match status" value="1"/>
</dbReference>
<dbReference type="Gene3D" id="1.10.375.10">
    <property type="entry name" value="Human Immunodeficiency Virus Type 1 Capsid Protein"/>
    <property type="match status" value="1"/>
</dbReference>
<dbReference type="Gene3D" id="1.10.150.90">
    <property type="entry name" value="Immunodeficiency lentiviruses, gag gene matrix protein p17"/>
    <property type="match status" value="1"/>
</dbReference>
<dbReference type="Gene3D" id="2.30.30.10">
    <property type="entry name" value="Integrase, C-terminal domain superfamily, retroviral"/>
    <property type="match status" value="1"/>
</dbReference>
<dbReference type="Gene3D" id="3.30.420.10">
    <property type="entry name" value="Ribonuclease H-like superfamily/Ribonuclease H"/>
    <property type="match status" value="2"/>
</dbReference>
<dbReference type="Gene3D" id="1.20.5.760">
    <property type="entry name" value="Single helix bin"/>
    <property type="match status" value="1"/>
</dbReference>
<dbReference type="Gene3D" id="4.10.60.10">
    <property type="entry name" value="Zinc finger, CCHC-type"/>
    <property type="match status" value="1"/>
</dbReference>
<dbReference type="InterPro" id="IPR001969">
    <property type="entry name" value="Aspartic_peptidase_AS"/>
</dbReference>
<dbReference type="InterPro" id="IPR043502">
    <property type="entry name" value="DNA/RNA_pol_sf"/>
</dbReference>
<dbReference type="InterPro" id="IPR045345">
    <property type="entry name" value="Gag_p24_C"/>
</dbReference>
<dbReference type="InterPro" id="IPR017856">
    <property type="entry name" value="Integrase-like_N"/>
</dbReference>
<dbReference type="InterPro" id="IPR036862">
    <property type="entry name" value="Integrase_C_dom_sf_retrovir"/>
</dbReference>
<dbReference type="InterPro" id="IPR001037">
    <property type="entry name" value="Integrase_C_retrovir"/>
</dbReference>
<dbReference type="InterPro" id="IPR001584">
    <property type="entry name" value="Integrase_cat-core"/>
</dbReference>
<dbReference type="InterPro" id="IPR003308">
    <property type="entry name" value="Integrase_Zn-bd_dom_N"/>
</dbReference>
<dbReference type="InterPro" id="IPR000071">
    <property type="entry name" value="Lentvrl_matrix_N"/>
</dbReference>
<dbReference type="InterPro" id="IPR012344">
    <property type="entry name" value="Matrix_HIV/RSV_N"/>
</dbReference>
<dbReference type="InterPro" id="IPR001995">
    <property type="entry name" value="Peptidase_A2_cat"/>
</dbReference>
<dbReference type="InterPro" id="IPR021109">
    <property type="entry name" value="Peptidase_aspartic_dom_sf"/>
</dbReference>
<dbReference type="InterPro" id="IPR034170">
    <property type="entry name" value="Retropepsin-like_cat_dom"/>
</dbReference>
<dbReference type="InterPro" id="IPR018061">
    <property type="entry name" value="Retropepsins"/>
</dbReference>
<dbReference type="InterPro" id="IPR008916">
    <property type="entry name" value="Retrov_capsid_C"/>
</dbReference>
<dbReference type="InterPro" id="IPR008919">
    <property type="entry name" value="Retrov_capsid_N"/>
</dbReference>
<dbReference type="InterPro" id="IPR010999">
    <property type="entry name" value="Retrovr_matrix"/>
</dbReference>
<dbReference type="InterPro" id="IPR043128">
    <property type="entry name" value="Rev_trsase/Diguanyl_cyclase"/>
</dbReference>
<dbReference type="InterPro" id="IPR012337">
    <property type="entry name" value="RNaseH-like_sf"/>
</dbReference>
<dbReference type="InterPro" id="IPR002156">
    <property type="entry name" value="RNaseH_domain"/>
</dbReference>
<dbReference type="InterPro" id="IPR036397">
    <property type="entry name" value="RNaseH_sf"/>
</dbReference>
<dbReference type="InterPro" id="IPR000477">
    <property type="entry name" value="RT_dom"/>
</dbReference>
<dbReference type="InterPro" id="IPR010659">
    <property type="entry name" value="RVT_connect"/>
</dbReference>
<dbReference type="InterPro" id="IPR010661">
    <property type="entry name" value="RVT_thumb"/>
</dbReference>
<dbReference type="InterPro" id="IPR001878">
    <property type="entry name" value="Znf_CCHC"/>
</dbReference>
<dbReference type="InterPro" id="IPR036875">
    <property type="entry name" value="Znf_CCHC_sf"/>
</dbReference>
<dbReference type="PANTHER" id="PTHR41694">
    <property type="entry name" value="ENDOGENOUS RETROVIRUS GROUP K MEMBER POL PROTEIN"/>
    <property type="match status" value="1"/>
</dbReference>
<dbReference type="PANTHER" id="PTHR41694:SF3">
    <property type="entry name" value="RNA-DIRECTED DNA POLYMERASE-RELATED"/>
    <property type="match status" value="1"/>
</dbReference>
<dbReference type="Pfam" id="PF00540">
    <property type="entry name" value="Gag_p17"/>
    <property type="match status" value="1"/>
</dbReference>
<dbReference type="Pfam" id="PF19317">
    <property type="entry name" value="Gag_p24_C"/>
    <property type="match status" value="1"/>
</dbReference>
<dbReference type="Pfam" id="PF00552">
    <property type="entry name" value="IN_DBD_C"/>
    <property type="match status" value="1"/>
</dbReference>
<dbReference type="Pfam" id="PF02022">
    <property type="entry name" value="Integrase_Zn"/>
    <property type="match status" value="1"/>
</dbReference>
<dbReference type="Pfam" id="PF00075">
    <property type="entry name" value="RNase_H"/>
    <property type="match status" value="1"/>
</dbReference>
<dbReference type="Pfam" id="PF00665">
    <property type="entry name" value="rve"/>
    <property type="match status" value="1"/>
</dbReference>
<dbReference type="Pfam" id="PF00077">
    <property type="entry name" value="RVP"/>
    <property type="match status" value="1"/>
</dbReference>
<dbReference type="Pfam" id="PF00078">
    <property type="entry name" value="RVT_1"/>
    <property type="match status" value="1"/>
</dbReference>
<dbReference type="Pfam" id="PF06815">
    <property type="entry name" value="RVT_connect"/>
    <property type="match status" value="1"/>
</dbReference>
<dbReference type="Pfam" id="PF06817">
    <property type="entry name" value="RVT_thumb"/>
    <property type="match status" value="1"/>
</dbReference>
<dbReference type="Pfam" id="PF00098">
    <property type="entry name" value="zf-CCHC"/>
    <property type="match status" value="2"/>
</dbReference>
<dbReference type="PRINTS" id="PR00234">
    <property type="entry name" value="HIV1MATRIX"/>
</dbReference>
<dbReference type="SMART" id="SM00343">
    <property type="entry name" value="ZnF_C2HC"/>
    <property type="match status" value="2"/>
</dbReference>
<dbReference type="SUPFAM" id="SSF50630">
    <property type="entry name" value="Acid proteases"/>
    <property type="match status" value="1"/>
</dbReference>
<dbReference type="SUPFAM" id="SSF50122">
    <property type="entry name" value="DNA-binding domain of retroviral integrase"/>
    <property type="match status" value="1"/>
</dbReference>
<dbReference type="SUPFAM" id="SSF56672">
    <property type="entry name" value="DNA/RNA polymerases"/>
    <property type="match status" value="1"/>
</dbReference>
<dbReference type="SUPFAM" id="SSF46919">
    <property type="entry name" value="N-terminal Zn binding domain of HIV integrase"/>
    <property type="match status" value="1"/>
</dbReference>
<dbReference type="SUPFAM" id="SSF47836">
    <property type="entry name" value="Retroviral matrix proteins"/>
    <property type="match status" value="1"/>
</dbReference>
<dbReference type="SUPFAM" id="SSF47353">
    <property type="entry name" value="Retrovirus capsid dimerization domain-like"/>
    <property type="match status" value="1"/>
</dbReference>
<dbReference type="SUPFAM" id="SSF47943">
    <property type="entry name" value="Retrovirus capsid protein, N-terminal core domain"/>
    <property type="match status" value="1"/>
</dbReference>
<dbReference type="SUPFAM" id="SSF57756">
    <property type="entry name" value="Retrovirus zinc finger-like domains"/>
    <property type="match status" value="1"/>
</dbReference>
<dbReference type="SUPFAM" id="SSF53098">
    <property type="entry name" value="Ribonuclease H-like"/>
    <property type="match status" value="2"/>
</dbReference>
<dbReference type="PROSITE" id="PS50175">
    <property type="entry name" value="ASP_PROT_RETROV"/>
    <property type="match status" value="1"/>
</dbReference>
<dbReference type="PROSITE" id="PS00141">
    <property type="entry name" value="ASP_PROTEASE"/>
    <property type="match status" value="1"/>
</dbReference>
<dbReference type="PROSITE" id="PS50994">
    <property type="entry name" value="INTEGRASE"/>
    <property type="match status" value="1"/>
</dbReference>
<dbReference type="PROSITE" id="PS51027">
    <property type="entry name" value="INTEGRASE_DBD"/>
    <property type="match status" value="1"/>
</dbReference>
<dbReference type="PROSITE" id="PS50879">
    <property type="entry name" value="RNASE_H_1"/>
    <property type="match status" value="1"/>
</dbReference>
<dbReference type="PROSITE" id="PS50878">
    <property type="entry name" value="RT_POL"/>
    <property type="match status" value="1"/>
</dbReference>
<dbReference type="PROSITE" id="PS50158">
    <property type="entry name" value="ZF_CCHC"/>
    <property type="match status" value="2"/>
</dbReference>
<dbReference type="PROSITE" id="PS50876">
    <property type="entry name" value="ZF_INTEGRASE"/>
    <property type="match status" value="1"/>
</dbReference>
<evidence type="ECO:0000250" key="1"/>
<evidence type="ECO:0000250" key="2">
    <source>
        <dbReference type="UniProtKB" id="P03347"/>
    </source>
</evidence>
<evidence type="ECO:0000250" key="3">
    <source>
        <dbReference type="UniProtKB" id="P03366"/>
    </source>
</evidence>
<evidence type="ECO:0000250" key="4">
    <source>
        <dbReference type="UniProtKB" id="P03367"/>
    </source>
</evidence>
<evidence type="ECO:0000250" key="5">
    <source>
        <dbReference type="UniProtKB" id="P04585"/>
    </source>
</evidence>
<evidence type="ECO:0000250" key="6">
    <source>
        <dbReference type="UniProtKB" id="P12493"/>
    </source>
</evidence>
<evidence type="ECO:0000250" key="7">
    <source>
        <dbReference type="UniProtKB" id="P12497"/>
    </source>
</evidence>
<evidence type="ECO:0000255" key="8"/>
<evidence type="ECO:0000255" key="9">
    <source>
        <dbReference type="PROSITE-ProRule" id="PRU00047"/>
    </source>
</evidence>
<evidence type="ECO:0000255" key="10">
    <source>
        <dbReference type="PROSITE-ProRule" id="PRU00275"/>
    </source>
</evidence>
<evidence type="ECO:0000255" key="11">
    <source>
        <dbReference type="PROSITE-ProRule" id="PRU00405"/>
    </source>
</evidence>
<evidence type="ECO:0000255" key="12">
    <source>
        <dbReference type="PROSITE-ProRule" id="PRU00408"/>
    </source>
</evidence>
<evidence type="ECO:0000255" key="13">
    <source>
        <dbReference type="PROSITE-ProRule" id="PRU00450"/>
    </source>
</evidence>
<evidence type="ECO:0000255" key="14">
    <source>
        <dbReference type="PROSITE-ProRule" id="PRU00457"/>
    </source>
</evidence>
<evidence type="ECO:0000255" key="15">
    <source>
        <dbReference type="PROSITE-ProRule" id="PRU00506"/>
    </source>
</evidence>
<evidence type="ECO:0000255" key="16">
    <source>
        <dbReference type="PROSITE-ProRule" id="PRU10094"/>
    </source>
</evidence>
<evidence type="ECO:0000256" key="17">
    <source>
        <dbReference type="SAM" id="MobiDB-lite"/>
    </source>
</evidence>
<evidence type="ECO:0000305" key="18"/>